<feature type="chain" id="PRO_0000106400" description="Tetratricopeptide repeat protein 14">
    <location>
        <begin position="1"/>
        <end position="766"/>
    </location>
</feature>
<feature type="domain" description="S1 motif" evidence="2">
    <location>
        <begin position="125"/>
        <end position="207"/>
    </location>
</feature>
<feature type="repeat" description="TPR 1">
    <location>
        <begin position="209"/>
        <end position="242"/>
    </location>
</feature>
<feature type="repeat" description="TPR 2">
    <location>
        <begin position="306"/>
        <end position="339"/>
    </location>
</feature>
<feature type="repeat" description="TPR 3">
    <location>
        <begin position="341"/>
        <end position="373"/>
    </location>
</feature>
<feature type="repeat" description="TPR 4">
    <location>
        <begin position="381"/>
        <end position="414"/>
    </location>
</feature>
<feature type="region of interest" description="Disordered" evidence="3">
    <location>
        <begin position="35"/>
        <end position="55"/>
    </location>
</feature>
<feature type="region of interest" description="Disordered" evidence="3">
    <location>
        <begin position="463"/>
        <end position="743"/>
    </location>
</feature>
<feature type="compositionally biased region" description="Low complexity" evidence="3">
    <location>
        <begin position="475"/>
        <end position="496"/>
    </location>
</feature>
<feature type="compositionally biased region" description="Basic residues" evidence="3">
    <location>
        <begin position="497"/>
        <end position="506"/>
    </location>
</feature>
<feature type="compositionally biased region" description="Polar residues" evidence="3">
    <location>
        <begin position="539"/>
        <end position="550"/>
    </location>
</feature>
<feature type="compositionally biased region" description="Basic and acidic residues" evidence="3">
    <location>
        <begin position="551"/>
        <end position="562"/>
    </location>
</feature>
<feature type="compositionally biased region" description="Polar residues" evidence="3">
    <location>
        <begin position="594"/>
        <end position="605"/>
    </location>
</feature>
<feature type="compositionally biased region" description="Basic and acidic residues" evidence="3">
    <location>
        <begin position="606"/>
        <end position="616"/>
    </location>
</feature>
<feature type="compositionally biased region" description="Basic and acidic residues" evidence="3">
    <location>
        <begin position="629"/>
        <end position="657"/>
    </location>
</feature>
<feature type="compositionally biased region" description="Polar residues" evidence="3">
    <location>
        <begin position="661"/>
        <end position="673"/>
    </location>
</feature>
<feature type="compositionally biased region" description="Basic and acidic residues" evidence="3">
    <location>
        <begin position="707"/>
        <end position="738"/>
    </location>
</feature>
<feature type="modified residue" description="Phosphoserine" evidence="1">
    <location>
        <position position="666"/>
    </location>
</feature>
<feature type="splice variant" id="VSP_061584" description="In isoform 3.">
    <original>MDRDLLRQSLGCHGPALLSLLRSEQQDNPHFRSLLGTAAEPARGAAPPPGAGR</original>
    <variation>MAGMRLPSRRQSFPAPVSRENGLKTSSGTQWVKSLSIERPDLTDSQASQG</variation>
    <location>
        <begin position="1"/>
        <end position="53"/>
    </location>
</feature>
<feature type="splice variant" id="VSP_022193" description="In isoform 7.">
    <location>
        <begin position="233"/>
        <end position="284"/>
    </location>
</feature>
<feature type="splice variant" id="VSP_061585" description="In isoform 2 and isoform 3.">
    <original>KSLELREKQ</original>
    <variation>VILYFLFEI</variation>
    <location>
        <begin position="430"/>
        <end position="438"/>
    </location>
</feature>
<feature type="splice variant" id="VSP_061586" description="In isoform 6.">
    <original>KSLE</original>
    <variation>RKTS</variation>
    <location>
        <begin position="430"/>
        <end position="433"/>
    </location>
</feature>
<feature type="splice variant" id="VSP_061587" description="In isoform 6.">
    <location>
        <begin position="434"/>
        <end position="766"/>
    </location>
</feature>
<feature type="splice variant" id="VSP_061588" description="In isoform 2 and isoform 3.">
    <location>
        <begin position="439"/>
        <end position="766"/>
    </location>
</feature>
<feature type="sequence conflict" description="In Ref. 2; BAC27473/BAC30819/BAC29109/BAC26798/BAB28115, 1; BAD32593 and 4; AAH24847." evidence="4" ref="2 1 4">
    <original>M</original>
    <variation>L</variation>
    <location>
        <position position="230"/>
    </location>
</feature>
<feature type="sequence conflict" description="In Ref. 2; BAC26798." evidence="4" ref="2">
    <original>V</original>
    <variation>L</variation>
    <location>
        <position position="310"/>
    </location>
</feature>
<feature type="sequence conflict" description="In Ref. 2; BAC26798." evidence="4" ref="2">
    <original>L</original>
    <variation>Q</variation>
    <location>
        <position position="356"/>
    </location>
</feature>
<feature type="sequence conflict" description="In Ref. 2; BAB28115 and 1; BAD32593." evidence="4" ref="2 1">
    <original>Q</original>
    <variation>QKSLEL</variation>
    <location>
        <position position="429"/>
    </location>
</feature>
<feature type="sequence conflict" description="In Ref. 1; BAD32593." evidence="4" ref="1">
    <original>R</original>
    <variation>S</variation>
    <location>
        <position position="453"/>
    </location>
</feature>
<proteinExistence type="evidence at protein level"/>
<dbReference type="EMBL" id="AK173315">
    <property type="protein sequence ID" value="BAD32593.1"/>
    <property type="status" value="ALT_INIT"/>
    <property type="molecule type" value="mRNA"/>
</dbReference>
<dbReference type="EMBL" id="AK012246">
    <property type="protein sequence ID" value="BAB28115.1"/>
    <property type="molecule type" value="mRNA"/>
</dbReference>
<dbReference type="EMBL" id="AK030130">
    <property type="protein sequence ID" value="BAC26798.1"/>
    <property type="molecule type" value="mRNA"/>
</dbReference>
<dbReference type="EMBL" id="AK030203">
    <property type="status" value="NOT_ANNOTATED_CDS"/>
    <property type="molecule type" value="mRNA"/>
</dbReference>
<dbReference type="EMBL" id="AK031605">
    <property type="protein sequence ID" value="BAC27473.1"/>
    <property type="molecule type" value="mRNA"/>
</dbReference>
<dbReference type="EMBL" id="AK035570">
    <property type="protein sequence ID" value="BAC29109.1"/>
    <property type="molecule type" value="mRNA"/>
</dbReference>
<dbReference type="EMBL" id="AK041095">
    <property type="protein sequence ID" value="BAC30819.1"/>
    <property type="status" value="ALT_FRAME"/>
    <property type="molecule type" value="mRNA"/>
</dbReference>
<dbReference type="EMBL" id="BC024847">
    <property type="protein sequence ID" value="AAH24847.1"/>
    <property type="molecule type" value="mRNA"/>
</dbReference>
<dbReference type="CCDS" id="CCDS17303.1">
    <molecule id="Q9CSP9-2"/>
</dbReference>
<dbReference type="CCDS" id="CCDS38410.1">
    <molecule id="Q9CSP9-5"/>
</dbReference>
<dbReference type="CCDS" id="CCDS71232.1">
    <molecule id="Q9CSP9-7"/>
</dbReference>
<dbReference type="CCDS" id="CCDS79895.1">
    <molecule id="Q9CSP9-3"/>
</dbReference>
<dbReference type="RefSeq" id="NP_001277429.1">
    <property type="nucleotide sequence ID" value="NM_001290500.1"/>
</dbReference>
<dbReference type="RefSeq" id="NP_001277431.1">
    <property type="nucleotide sequence ID" value="NM_001290502.1"/>
</dbReference>
<dbReference type="RefSeq" id="NP_080254.2">
    <property type="nucleotide sequence ID" value="NM_025978.4"/>
</dbReference>
<dbReference type="RefSeq" id="NP_081895.2">
    <property type="nucleotide sequence ID" value="NM_027619.4"/>
</dbReference>
<dbReference type="SMR" id="Q9CSP9"/>
<dbReference type="BioGRID" id="211954">
    <property type="interactions" value="1"/>
</dbReference>
<dbReference type="FunCoup" id="Q9CSP9">
    <property type="interactions" value="274"/>
</dbReference>
<dbReference type="STRING" id="10090.ENSMUSP00000103845"/>
<dbReference type="iPTMnet" id="Q9CSP9"/>
<dbReference type="PhosphoSitePlus" id="Q9CSP9"/>
<dbReference type="jPOST" id="Q9CSP9"/>
<dbReference type="PaxDb" id="10090-ENSMUSP00000103845"/>
<dbReference type="PeptideAtlas" id="Q9CSP9"/>
<dbReference type="ProteomicsDB" id="297741">
    <molecule id="Q9CSP9-2"/>
</dbReference>
<dbReference type="ProteomicsDB" id="297742">
    <molecule id="Q9CSP9-3"/>
</dbReference>
<dbReference type="ProteomicsDB" id="328974"/>
<dbReference type="Antibodypedia" id="2146">
    <property type="antibodies" value="109 antibodies from 18 providers"/>
</dbReference>
<dbReference type="DNASU" id="67120"/>
<dbReference type="GeneID" id="67120"/>
<dbReference type="KEGG" id="mmu:67120"/>
<dbReference type="UCSC" id="uc008oxa.2">
    <molecule id="Q9CSP9-3"/>
    <property type="organism name" value="mouse"/>
</dbReference>
<dbReference type="UCSC" id="uc008oxc.2">
    <property type="organism name" value="mouse"/>
</dbReference>
<dbReference type="AGR" id="MGI:1914370"/>
<dbReference type="CTD" id="151613"/>
<dbReference type="MGI" id="MGI:1914370">
    <property type="gene designation" value="Ttc14"/>
</dbReference>
<dbReference type="VEuPathDB" id="HostDB:ENSMUSG00000027677"/>
<dbReference type="eggNOG" id="ENOG502QPJ1">
    <property type="taxonomic scope" value="Eukaryota"/>
</dbReference>
<dbReference type="HOGENOM" id="CLU_020585_1_0_1"/>
<dbReference type="InParanoid" id="Q9CSP9"/>
<dbReference type="OrthoDB" id="1914839at2759"/>
<dbReference type="PhylomeDB" id="Q9CSP9"/>
<dbReference type="TreeFam" id="TF325777"/>
<dbReference type="BioGRID-ORCS" id="67120">
    <property type="hits" value="18 hits in 77 CRISPR screens"/>
</dbReference>
<dbReference type="ChiTaRS" id="Ttc14">
    <property type="organism name" value="mouse"/>
</dbReference>
<dbReference type="PRO" id="PR:Q9CSP9"/>
<dbReference type="Proteomes" id="UP000000589">
    <property type="component" value="Chromosome 3"/>
</dbReference>
<dbReference type="RNAct" id="Q9CSP9">
    <property type="molecule type" value="protein"/>
</dbReference>
<dbReference type="Bgee" id="ENSMUSG00000027677">
    <property type="expression patterns" value="Expressed in medial geniculate body and 254 other cell types or tissues"/>
</dbReference>
<dbReference type="GO" id="GO:0003676">
    <property type="term" value="F:nucleic acid binding"/>
    <property type="evidence" value="ECO:0007669"/>
    <property type="project" value="InterPro"/>
</dbReference>
<dbReference type="CDD" id="cd00164">
    <property type="entry name" value="S1_like"/>
    <property type="match status" value="1"/>
</dbReference>
<dbReference type="Gene3D" id="2.40.50.140">
    <property type="entry name" value="Nucleic acid-binding proteins"/>
    <property type="match status" value="1"/>
</dbReference>
<dbReference type="Gene3D" id="1.25.40.10">
    <property type="entry name" value="Tetratricopeptide repeat domain"/>
    <property type="match status" value="1"/>
</dbReference>
<dbReference type="InterPro" id="IPR012340">
    <property type="entry name" value="NA-bd_OB-fold"/>
</dbReference>
<dbReference type="InterPro" id="IPR003029">
    <property type="entry name" value="S1_domain"/>
</dbReference>
<dbReference type="InterPro" id="IPR011990">
    <property type="entry name" value="TPR-like_helical_dom_sf"/>
</dbReference>
<dbReference type="InterPro" id="IPR019734">
    <property type="entry name" value="TPR_rpt"/>
</dbReference>
<dbReference type="InterPro" id="IPR039190">
    <property type="entry name" value="TTC14"/>
</dbReference>
<dbReference type="PANTHER" id="PTHR23184">
    <property type="entry name" value="TETRATRICOPEPTIDE REPEAT PROTEIN 14"/>
    <property type="match status" value="1"/>
</dbReference>
<dbReference type="PANTHER" id="PTHR23184:SF9">
    <property type="entry name" value="TETRATRICOPEPTIDE REPEAT PROTEIN 14"/>
    <property type="match status" value="1"/>
</dbReference>
<dbReference type="Pfam" id="PF13414">
    <property type="entry name" value="TPR_11"/>
    <property type="match status" value="1"/>
</dbReference>
<dbReference type="SMART" id="SM00028">
    <property type="entry name" value="TPR"/>
    <property type="match status" value="3"/>
</dbReference>
<dbReference type="SUPFAM" id="SSF50249">
    <property type="entry name" value="Nucleic acid-binding proteins"/>
    <property type="match status" value="1"/>
</dbReference>
<dbReference type="SUPFAM" id="SSF48452">
    <property type="entry name" value="TPR-like"/>
    <property type="match status" value="1"/>
</dbReference>
<dbReference type="PROSITE" id="PS50126">
    <property type="entry name" value="S1"/>
    <property type="match status" value="1"/>
</dbReference>
<dbReference type="PROSITE" id="PS50005">
    <property type="entry name" value="TPR"/>
    <property type="match status" value="3"/>
</dbReference>
<dbReference type="PROSITE" id="PS50293">
    <property type="entry name" value="TPR_REGION"/>
    <property type="match status" value="1"/>
</dbReference>
<organism>
    <name type="scientific">Mus musculus</name>
    <name type="common">Mouse</name>
    <dbReference type="NCBI Taxonomy" id="10090"/>
    <lineage>
        <taxon>Eukaryota</taxon>
        <taxon>Metazoa</taxon>
        <taxon>Chordata</taxon>
        <taxon>Craniata</taxon>
        <taxon>Vertebrata</taxon>
        <taxon>Euteleostomi</taxon>
        <taxon>Mammalia</taxon>
        <taxon>Eutheria</taxon>
        <taxon>Euarchontoglires</taxon>
        <taxon>Glires</taxon>
        <taxon>Rodentia</taxon>
        <taxon>Myomorpha</taxon>
        <taxon>Muroidea</taxon>
        <taxon>Muridae</taxon>
        <taxon>Murinae</taxon>
        <taxon>Mus</taxon>
        <taxon>Mus</taxon>
    </lineage>
</organism>
<evidence type="ECO:0000250" key="1">
    <source>
        <dbReference type="UniProtKB" id="Q96N46"/>
    </source>
</evidence>
<evidence type="ECO:0000255" key="2">
    <source>
        <dbReference type="PROSITE-ProRule" id="PRU00180"/>
    </source>
</evidence>
<evidence type="ECO:0000256" key="3">
    <source>
        <dbReference type="SAM" id="MobiDB-lite"/>
    </source>
</evidence>
<evidence type="ECO:0000305" key="4"/>
<evidence type="ECO:0000312" key="5">
    <source>
        <dbReference type="MGI" id="MGI:1914370"/>
    </source>
</evidence>
<protein>
    <recommendedName>
        <fullName evidence="4">Tetratricopeptide repeat protein 14</fullName>
        <shortName>TPR repeat protein 14</shortName>
    </recommendedName>
</protein>
<sequence>MDRDLLRQSLGCHGPALLSLLRSEQQDNPHFRSLLGTAAEPARGAAPPPGAGRKEKRVDNIEIQKFISKKADLLFALSWKSDASPPSEVHDDNDNLYAVMPPLEQFMEMPSMDRRELFFRDIERGDIVIGRISSIREFGFFMVLICLGSGIVRDISHLEITALCPLRDVPSHSNHGDPLSYYQTGDIIRAGIKDIDRYHEKLAVSLYSSSLPPHMAGIKLGVITSEELPMYYRRSVELNSNSLESYENIMQSSLGFVNPGVVEFLLEKLGIDESHPPSLMRGLQSKNFSEDDFASALRKKQSASWALKCVKIGVDYFKVGRHVDAMNEYNKALEIDKQNVEALVARGALYATKGSLNKAIEDFELALENCPTHRNARKYLCQTLVERGGQLEEEEKFLNAESYYKKALTLDETFKDAEDALQKLHKYMQKSLELREKQAEKEEKQKTKKIETRAEKLRKLLKEEKRLKKKRRKSSSSSSVSSADESVSSSSSSSSSSHKRHKKSKRNRSESSRSSKRHWSRPSSGHTDQSRKDDCYPVPTNTSASFLNQKQEVEKLLEKQDRLQCPNAQVKEKERGLLTSSGEVPDDLGGRSDFYNSYKTQAGSSKTEKPYKSERHFSRRNSSDSFSRNSEDKMKASSYRRFEKDTEGRKDHSRRWEPSSVKYSTSPASSDYSWKSLEKQKKYTYSGSRDVSKHEQRYQLNTNQGERVYEKEDSCGEGNRNEAPEEMLNSKEQPDSRVKKNLPQNLLNIFNQIAEFEKEKGNKPKK</sequence>
<accession>Q9CSP9</accession>
<accession>G3X9T5</accession>
<accession>Q69Z51</accession>
<accession>Q8BRX6</accession>
<accession>Q8CD24</accession>
<accession>Q8CDF8</accession>
<accession>Q8R3Q9</accession>
<keyword id="KW-0025">Alternative splicing</keyword>
<keyword id="KW-0597">Phosphoprotein</keyword>
<keyword id="KW-1185">Reference proteome</keyword>
<keyword id="KW-0677">Repeat</keyword>
<keyword id="KW-0802">TPR repeat</keyword>
<reference key="1">
    <citation type="journal article" date="2004" name="DNA Res.">
        <title>Prediction of the coding sequences of mouse homologues of KIAA gene: IV. The complete nucleotide sequences of 500 mouse KIAA-homologous cDNAs identified by screening of terminal sequences of cDNA clones randomly sampled from size-fractionated libraries.</title>
        <authorList>
            <person name="Okazaki N."/>
            <person name="Kikuno R."/>
            <person name="Ohara R."/>
            <person name="Inamoto S."/>
            <person name="Koseki H."/>
            <person name="Hiraoka S."/>
            <person name="Saga Y."/>
            <person name="Seino S."/>
            <person name="Nishimura M."/>
            <person name="Kaisho T."/>
            <person name="Hoshino K."/>
            <person name="Kitamura H."/>
            <person name="Nagase T."/>
            <person name="Ohara O."/>
            <person name="Koga H."/>
        </authorList>
    </citation>
    <scope>NUCLEOTIDE SEQUENCE [LARGE SCALE MRNA] (ISOFORM 7)</scope>
    <source>
        <tissue>Fetal brain</tissue>
    </source>
</reference>
<reference key="2">
    <citation type="journal article" date="2005" name="Science">
        <title>The transcriptional landscape of the mammalian genome.</title>
        <authorList>
            <person name="Carninci P."/>
            <person name="Kasukawa T."/>
            <person name="Katayama S."/>
            <person name="Gough J."/>
            <person name="Frith M.C."/>
            <person name="Maeda N."/>
            <person name="Oyama R."/>
            <person name="Ravasi T."/>
            <person name="Lenhard B."/>
            <person name="Wells C."/>
            <person name="Kodzius R."/>
            <person name="Shimokawa K."/>
            <person name="Bajic V.B."/>
            <person name="Brenner S.E."/>
            <person name="Batalov S."/>
            <person name="Forrest A.R."/>
            <person name="Zavolan M."/>
            <person name="Davis M.J."/>
            <person name="Wilming L.G."/>
            <person name="Aidinis V."/>
            <person name="Allen J.E."/>
            <person name="Ambesi-Impiombato A."/>
            <person name="Apweiler R."/>
            <person name="Aturaliya R.N."/>
            <person name="Bailey T.L."/>
            <person name="Bansal M."/>
            <person name="Baxter L."/>
            <person name="Beisel K.W."/>
            <person name="Bersano T."/>
            <person name="Bono H."/>
            <person name="Chalk A.M."/>
            <person name="Chiu K.P."/>
            <person name="Choudhary V."/>
            <person name="Christoffels A."/>
            <person name="Clutterbuck D.R."/>
            <person name="Crowe M.L."/>
            <person name="Dalla E."/>
            <person name="Dalrymple B.P."/>
            <person name="de Bono B."/>
            <person name="Della Gatta G."/>
            <person name="di Bernardo D."/>
            <person name="Down T."/>
            <person name="Engstrom P."/>
            <person name="Fagiolini M."/>
            <person name="Faulkner G."/>
            <person name="Fletcher C.F."/>
            <person name="Fukushima T."/>
            <person name="Furuno M."/>
            <person name="Futaki S."/>
            <person name="Gariboldi M."/>
            <person name="Georgii-Hemming P."/>
            <person name="Gingeras T.R."/>
            <person name="Gojobori T."/>
            <person name="Green R.E."/>
            <person name="Gustincich S."/>
            <person name="Harbers M."/>
            <person name="Hayashi Y."/>
            <person name="Hensch T.K."/>
            <person name="Hirokawa N."/>
            <person name="Hill D."/>
            <person name="Huminiecki L."/>
            <person name="Iacono M."/>
            <person name="Ikeo K."/>
            <person name="Iwama A."/>
            <person name="Ishikawa T."/>
            <person name="Jakt M."/>
            <person name="Kanapin A."/>
            <person name="Katoh M."/>
            <person name="Kawasawa Y."/>
            <person name="Kelso J."/>
            <person name="Kitamura H."/>
            <person name="Kitano H."/>
            <person name="Kollias G."/>
            <person name="Krishnan S.P."/>
            <person name="Kruger A."/>
            <person name="Kummerfeld S.K."/>
            <person name="Kurochkin I.V."/>
            <person name="Lareau L.F."/>
            <person name="Lazarevic D."/>
            <person name="Lipovich L."/>
            <person name="Liu J."/>
            <person name="Liuni S."/>
            <person name="McWilliam S."/>
            <person name="Madan Babu M."/>
            <person name="Madera M."/>
            <person name="Marchionni L."/>
            <person name="Matsuda H."/>
            <person name="Matsuzawa S."/>
            <person name="Miki H."/>
            <person name="Mignone F."/>
            <person name="Miyake S."/>
            <person name="Morris K."/>
            <person name="Mottagui-Tabar S."/>
            <person name="Mulder N."/>
            <person name="Nakano N."/>
            <person name="Nakauchi H."/>
            <person name="Ng P."/>
            <person name="Nilsson R."/>
            <person name="Nishiguchi S."/>
            <person name="Nishikawa S."/>
            <person name="Nori F."/>
            <person name="Ohara O."/>
            <person name="Okazaki Y."/>
            <person name="Orlando V."/>
            <person name="Pang K.C."/>
            <person name="Pavan W.J."/>
            <person name="Pavesi G."/>
            <person name="Pesole G."/>
            <person name="Petrovsky N."/>
            <person name="Piazza S."/>
            <person name="Reed J."/>
            <person name="Reid J.F."/>
            <person name="Ring B.Z."/>
            <person name="Ringwald M."/>
            <person name="Rost B."/>
            <person name="Ruan Y."/>
            <person name="Salzberg S.L."/>
            <person name="Sandelin A."/>
            <person name="Schneider C."/>
            <person name="Schoenbach C."/>
            <person name="Sekiguchi K."/>
            <person name="Semple C.A."/>
            <person name="Seno S."/>
            <person name="Sessa L."/>
            <person name="Sheng Y."/>
            <person name="Shibata Y."/>
            <person name="Shimada H."/>
            <person name="Shimada K."/>
            <person name="Silva D."/>
            <person name="Sinclair B."/>
            <person name="Sperling S."/>
            <person name="Stupka E."/>
            <person name="Sugiura K."/>
            <person name="Sultana R."/>
            <person name="Takenaka Y."/>
            <person name="Taki K."/>
            <person name="Tammoja K."/>
            <person name="Tan S.L."/>
            <person name="Tang S."/>
            <person name="Taylor M.S."/>
            <person name="Tegner J."/>
            <person name="Teichmann S.A."/>
            <person name="Ueda H.R."/>
            <person name="van Nimwegen E."/>
            <person name="Verardo R."/>
            <person name="Wei C.L."/>
            <person name="Yagi K."/>
            <person name="Yamanishi H."/>
            <person name="Zabarovsky E."/>
            <person name="Zhu S."/>
            <person name="Zimmer A."/>
            <person name="Hide W."/>
            <person name="Bult C."/>
            <person name="Grimmond S.M."/>
            <person name="Teasdale R.D."/>
            <person name="Liu E.T."/>
            <person name="Brusic V."/>
            <person name="Quackenbush J."/>
            <person name="Wahlestedt C."/>
            <person name="Mattick J.S."/>
            <person name="Hume D.A."/>
            <person name="Kai C."/>
            <person name="Sasaki D."/>
            <person name="Tomaru Y."/>
            <person name="Fukuda S."/>
            <person name="Kanamori-Katayama M."/>
            <person name="Suzuki M."/>
            <person name="Aoki J."/>
            <person name="Arakawa T."/>
            <person name="Iida J."/>
            <person name="Imamura K."/>
            <person name="Itoh M."/>
            <person name="Kato T."/>
            <person name="Kawaji H."/>
            <person name="Kawagashira N."/>
            <person name="Kawashima T."/>
            <person name="Kojima M."/>
            <person name="Kondo S."/>
            <person name="Konno H."/>
            <person name="Nakano K."/>
            <person name="Ninomiya N."/>
            <person name="Nishio T."/>
            <person name="Okada M."/>
            <person name="Plessy C."/>
            <person name="Shibata K."/>
            <person name="Shiraki T."/>
            <person name="Suzuki S."/>
            <person name="Tagami M."/>
            <person name="Waki K."/>
            <person name="Watahiki A."/>
            <person name="Okamura-Oho Y."/>
            <person name="Suzuki H."/>
            <person name="Kawai J."/>
            <person name="Hayashizaki Y."/>
        </authorList>
    </citation>
    <scope>NUCLEOTIDE SEQUENCE [LARGE SCALE MRNA] (ISOFORMS 2; 3 AND 6)</scope>
    <scope>NUCLEOTIDE SEQUENCE [LARGE SCALE MRNA] OF 1-441 (ISOFORM 5)</scope>
    <source>
        <strain>C57BL/6J</strain>
        <tissue>Aorta</tissue>
        <tissue>Embryo</tissue>
        <tissue>Testis</tissue>
        <tissue>Vein</tissue>
    </source>
</reference>
<reference key="3">
    <citation type="journal article" date="2009" name="PLoS Biol.">
        <title>Lineage-specific biology revealed by a finished genome assembly of the mouse.</title>
        <authorList>
            <person name="Church D.M."/>
            <person name="Goodstadt L."/>
            <person name="Hillier L.W."/>
            <person name="Zody M.C."/>
            <person name="Goldstein S."/>
            <person name="She X."/>
            <person name="Bult C.J."/>
            <person name="Agarwala R."/>
            <person name="Cherry J.L."/>
            <person name="DiCuccio M."/>
            <person name="Hlavina W."/>
            <person name="Kapustin Y."/>
            <person name="Meric P."/>
            <person name="Maglott D."/>
            <person name="Birtle Z."/>
            <person name="Marques A.C."/>
            <person name="Graves T."/>
            <person name="Zhou S."/>
            <person name="Teague B."/>
            <person name="Potamousis K."/>
            <person name="Churas C."/>
            <person name="Place M."/>
            <person name="Herschleb J."/>
            <person name="Runnheim R."/>
            <person name="Forrest D."/>
            <person name="Amos-Landgraf J."/>
            <person name="Schwartz D.C."/>
            <person name="Cheng Z."/>
            <person name="Lindblad-Toh K."/>
            <person name="Eichler E.E."/>
            <person name="Ponting C.P."/>
        </authorList>
    </citation>
    <scope>NUCLEOTIDE SEQUENCE [LARGE SCALE GENOMIC DNA]</scope>
    <source>
        <strain>C57BL/6J</strain>
    </source>
</reference>
<reference key="4">
    <citation type="journal article" date="2004" name="Genome Res.">
        <title>The status, quality, and expansion of the NIH full-length cDNA project: the Mammalian Gene Collection (MGC).</title>
        <authorList>
            <consortium name="The MGC Project Team"/>
        </authorList>
    </citation>
    <scope>NUCLEOTIDE SEQUENCE [LARGE SCALE MRNA] (ISOFORM 2)</scope>
    <source>
        <strain>FVB/N</strain>
        <tissue>Mammary gland</tissue>
    </source>
</reference>
<reference key="5">
    <citation type="journal article" date="2010" name="Cell">
        <title>A tissue-specific atlas of mouse protein phosphorylation and expression.</title>
        <authorList>
            <person name="Huttlin E.L."/>
            <person name="Jedrychowski M.P."/>
            <person name="Elias J.E."/>
            <person name="Goswami T."/>
            <person name="Rad R."/>
            <person name="Beausoleil S.A."/>
            <person name="Villen J."/>
            <person name="Haas W."/>
            <person name="Sowa M.E."/>
            <person name="Gygi S.P."/>
        </authorList>
    </citation>
    <scope>IDENTIFICATION BY MASS SPECTROMETRY [LARGE SCALE ANALYSIS]</scope>
    <source>
        <tissue>Testis</tissue>
    </source>
</reference>
<gene>
    <name evidence="5" type="primary">Ttc14</name>
    <name type="synonym">Kiaa1980</name>
</gene>
<name>TTC14_MOUSE</name>
<comment type="alternative products">
    <event type="alternative splicing"/>
    <isoform>
        <id>Q9CSP9-5</id>
        <name>5</name>
        <sequence type="displayed"/>
    </isoform>
    <isoform>
        <id>Q9CSP9-2</id>
        <name>2</name>
        <sequence type="described" ref="VSP_061585 VSP_061588"/>
    </isoform>
    <isoform>
        <id>Q9CSP9-3</id>
        <name>3</name>
        <sequence type="described" ref="VSP_061584 VSP_061585 VSP_061588"/>
    </isoform>
    <isoform>
        <id>Q9CSP9-6</id>
        <name>6</name>
        <sequence type="described" ref="VSP_061586 VSP_061587"/>
    </isoform>
    <isoform>
        <id>Q9CSP9-7</id>
        <name>7</name>
        <sequence type="described" ref="VSP_022193"/>
    </isoform>
</comment>
<comment type="miscellaneous">
    <molecule>Isoform 6</molecule>
    <text evidence="4">May be produced at very low levels due to a premature stop codon in the mRNA, leading to nonsense-mediated mRNA decay.</text>
</comment>
<comment type="similarity">
    <text evidence="4">Belongs to the TTC14 family.</text>
</comment>
<comment type="sequence caution" evidence="4">
    <conflict type="frameshift">
        <sequence resource="EMBL-CDS" id="BAC30819"/>
    </conflict>
</comment>
<comment type="sequence caution" evidence="4">
    <conflict type="erroneous initiation">
        <sequence resource="EMBL-CDS" id="BAD32593"/>
    </conflict>
    <text>Extended N-terminus.</text>
</comment>